<keyword id="KW-1003">Cell membrane</keyword>
<keyword id="KW-0460">Magnesium</keyword>
<keyword id="KW-0472">Membrane</keyword>
<keyword id="KW-0479">Metal-binding</keyword>
<keyword id="KW-1185">Reference proteome</keyword>
<keyword id="KW-0808">Transferase</keyword>
<keyword id="KW-0812">Transmembrane</keyword>
<keyword id="KW-1133">Transmembrane helix</keyword>
<reference key="1">
    <citation type="journal article" date="2008" name="Genome Res.">
        <title>Insights from the complete genome sequence of Mycobacterium marinum on the evolution of Mycobacterium tuberculosis.</title>
        <authorList>
            <person name="Stinear T.P."/>
            <person name="Seemann T."/>
            <person name="Harrison P.F."/>
            <person name="Jenkin G.A."/>
            <person name="Davies J.K."/>
            <person name="Johnson P.D."/>
            <person name="Abdellah Z."/>
            <person name="Arrowsmith C."/>
            <person name="Chillingworth T."/>
            <person name="Churcher C."/>
            <person name="Clarke K."/>
            <person name="Cronin A."/>
            <person name="Davis P."/>
            <person name="Goodhead I."/>
            <person name="Holroyd N."/>
            <person name="Jagels K."/>
            <person name="Lord A."/>
            <person name="Moule S."/>
            <person name="Mungall K."/>
            <person name="Norbertczak H."/>
            <person name="Quail M.A."/>
            <person name="Rabbinowitsch E."/>
            <person name="Walker D."/>
            <person name="White B."/>
            <person name="Whitehead S."/>
            <person name="Small P.L."/>
            <person name="Brosch R."/>
            <person name="Ramakrishnan L."/>
            <person name="Fischbach M.A."/>
            <person name="Parkhill J."/>
            <person name="Cole S.T."/>
        </authorList>
    </citation>
    <scope>NUCLEOTIDE SEQUENCE [LARGE SCALE GENOMIC DNA]</scope>
    <source>
        <strain>ATCC BAA-535 / M</strain>
    </source>
</reference>
<reference key="2">
    <citation type="journal article" date="2010" name="J. Biochem.">
        <title>A revised biosynthetic pathway for phosphatidylinositol in Mycobacteria.</title>
        <authorList>
            <person name="Morii H."/>
            <person name="Ogawa M."/>
            <person name="Fukuda K."/>
            <person name="Taniguchi H."/>
            <person name="Koga Y."/>
        </authorList>
    </citation>
    <scope>FUNCTION</scope>
    <scope>CATALYTIC ACTIVITY</scope>
    <scope>PATHWAY</scope>
</reference>
<accession>B2HM76</accession>
<name>PIPS_MYCMM</name>
<protein>
    <recommendedName>
        <fullName evidence="6">Phosphatidylinositol phosphate synthase</fullName>
        <shortName evidence="6">PIP synthase</shortName>
        <ecNumber evidence="5">2.7.8.-</ecNumber>
    </recommendedName>
    <alternativeName>
        <fullName>CDP-diacylglycerol--D-myo-inositol-3-phosphate 3-phosphatidyltransferase</fullName>
    </alternativeName>
</protein>
<sequence>MSKAPFLSRAAFARVTNPLARGLLRIGLTPDAVTIIGTTASVAGALVLFPMGKLFPGACVVWFFVLFDMLDGAMARERGGGTRFGAVLDAACDRISDGAVFGGLLWWVAFGMRDRLLVVATLICLVTSQVISYIKARAEASGLRGDGGIIERPERLIIVLAGAGVSDFPFIAWPPALPVAMWLLAVTSVITCGQRLYTVWTSPGATDLLVPSAPVRDDDAQGHPRSGDPGKTQR</sequence>
<comment type="function">
    <text evidence="5">Catalyzes the conjugation of the 1'-hydroxyl group of D-myo-inositol-3-phosphate (also named L-myo-inositol-1-phosphate) with a lipid tail of cytidine diphosphate diacylglycerol (CDP-DAG), forming phosphatidylinositol phosphate (PIP) and CMP. PIP is a precursor of phosphatidylinositol (PI) which is an essential lipid for mycobacteria required for formation of their cell wall.</text>
</comment>
<comment type="catalytic activity">
    <reaction evidence="5">
        <text>a CDP-1,2-diacyl-sn-glycerol + 1D-myo-inositol 3-phosphate = a 1,2-diacyl-sn-glycero-3-phospho-(1D-myo-inositol-3-phosphate) + CMP + H(+)</text>
        <dbReference type="Rhea" id="RHEA:60504"/>
        <dbReference type="ChEBI" id="CHEBI:15378"/>
        <dbReference type="ChEBI" id="CHEBI:58088"/>
        <dbReference type="ChEBI" id="CHEBI:58332"/>
        <dbReference type="ChEBI" id="CHEBI:58401"/>
        <dbReference type="ChEBI" id="CHEBI:60377"/>
    </reaction>
</comment>
<comment type="catalytic activity">
    <reaction evidence="5">
        <text>1,2-di-(9Z-octadecenoyl)-sn-glycero-3-cytidine-5'-diphosphate + 1D-myo-inositol 3-phosphate = 1,2-di-(9Z-octadecenoyl)-sn-glycero-3-phospho-(1D-myo-inositol-3-phosphate) + CMP + H(+)</text>
        <dbReference type="Rhea" id="RHEA:61216"/>
        <dbReference type="ChEBI" id="CHEBI:15378"/>
        <dbReference type="ChEBI" id="CHEBI:58401"/>
        <dbReference type="ChEBI" id="CHEBI:60377"/>
        <dbReference type="ChEBI" id="CHEBI:85356"/>
        <dbReference type="ChEBI" id="CHEBI:144472"/>
    </reaction>
</comment>
<comment type="cofactor">
    <cofactor evidence="1">
        <name>Mg(2+)</name>
        <dbReference type="ChEBI" id="CHEBI:18420"/>
    </cofactor>
    <text evidence="1">Contains a di-nuclear catalytic Mg(2+) center.</text>
</comment>
<comment type="pathway">
    <text evidence="5">Phospholipid metabolism; phosphatidylinositol phosphate biosynthesis.</text>
</comment>
<comment type="subunit">
    <text evidence="1">Homodimer.</text>
</comment>
<comment type="subcellular location">
    <subcellularLocation>
        <location evidence="2">Cell membrane</location>
        <topology evidence="2">Multi-pass membrane protein</topology>
    </subcellularLocation>
</comment>
<comment type="similarity">
    <text evidence="3">Belongs to the CDP-alcohol phosphatidyltransferase class-I family.</text>
</comment>
<organism>
    <name type="scientific">Mycobacterium marinum (strain ATCC BAA-535 / M)</name>
    <dbReference type="NCBI Taxonomy" id="216594"/>
    <lineage>
        <taxon>Bacteria</taxon>
        <taxon>Bacillati</taxon>
        <taxon>Actinomycetota</taxon>
        <taxon>Actinomycetes</taxon>
        <taxon>Mycobacteriales</taxon>
        <taxon>Mycobacteriaceae</taxon>
        <taxon>Mycobacterium</taxon>
        <taxon>Mycobacterium ulcerans group</taxon>
    </lineage>
</organism>
<evidence type="ECO:0000250" key="1">
    <source>
        <dbReference type="UniProtKB" id="P9WPG7"/>
    </source>
</evidence>
<evidence type="ECO:0000255" key="2"/>
<evidence type="ECO:0000255" key="3">
    <source>
        <dbReference type="HAMAP-Rule" id="MF_02241"/>
    </source>
</evidence>
<evidence type="ECO:0000256" key="4">
    <source>
        <dbReference type="SAM" id="MobiDB-lite"/>
    </source>
</evidence>
<evidence type="ECO:0000269" key="5">
    <source>
    </source>
</evidence>
<evidence type="ECO:0000303" key="6">
    <source>
    </source>
</evidence>
<evidence type="ECO:0000312" key="7">
    <source>
        <dbReference type="EMBL" id="ACC40540.1"/>
    </source>
</evidence>
<gene>
    <name evidence="7" type="primary">pgsA1</name>
    <name evidence="7" type="ordered locus">MMAR_2090</name>
</gene>
<feature type="chain" id="PRO_0000448360" description="Phosphatidylinositol phosphate synthase">
    <location>
        <begin position="1"/>
        <end position="234"/>
    </location>
</feature>
<feature type="transmembrane region" description="Helical" evidence="2">
    <location>
        <begin position="28"/>
        <end position="48"/>
    </location>
</feature>
<feature type="transmembrane region" description="Helical" evidence="2">
    <location>
        <begin position="54"/>
        <end position="70"/>
    </location>
</feature>
<feature type="transmembrane region" description="Helical" evidence="2">
    <location>
        <begin position="91"/>
        <end position="110"/>
    </location>
</feature>
<feature type="transmembrane region" description="Helical" evidence="2">
    <location>
        <begin position="116"/>
        <end position="134"/>
    </location>
</feature>
<feature type="transmembrane region" description="Helical" evidence="2">
    <location>
        <begin position="155"/>
        <end position="173"/>
    </location>
</feature>
<feature type="transmembrane region" description="Helical" evidence="2">
    <location>
        <begin position="179"/>
        <end position="197"/>
    </location>
</feature>
<feature type="region of interest" description="Disordered" evidence="4">
    <location>
        <begin position="211"/>
        <end position="234"/>
    </location>
</feature>
<feature type="compositionally biased region" description="Basic and acidic residues" evidence="4">
    <location>
        <begin position="215"/>
        <end position="228"/>
    </location>
</feature>
<feature type="active site" description="Proton acceptor" evidence="1">
    <location>
        <position position="93"/>
    </location>
</feature>
<feature type="binding site" evidence="1">
    <location>
        <begin position="31"/>
        <end position="34"/>
    </location>
    <ligand>
        <name>a CDP-1,2-diacyl-sn-glycerol</name>
        <dbReference type="ChEBI" id="CHEBI:58332"/>
    </ligand>
</feature>
<feature type="binding site" evidence="1">
    <location>
        <position position="68"/>
    </location>
    <ligand>
        <name>Mg(2+)</name>
        <dbReference type="ChEBI" id="CHEBI:18420"/>
        <label>1</label>
    </ligand>
</feature>
<feature type="binding site" evidence="1">
    <location>
        <position position="68"/>
    </location>
    <ligand>
        <name>Mg(2+)</name>
        <dbReference type="ChEBI" id="CHEBI:18420"/>
        <label>2</label>
    </ligand>
</feature>
<feature type="binding site" evidence="1">
    <location>
        <position position="71"/>
    </location>
    <ligand>
        <name>Mg(2+)</name>
        <dbReference type="ChEBI" id="CHEBI:18420"/>
        <label>1</label>
    </ligand>
</feature>
<feature type="binding site" evidence="1">
    <location>
        <position position="72"/>
    </location>
    <ligand>
        <name>a CDP-1,2-diacyl-sn-glycerol</name>
        <dbReference type="ChEBI" id="CHEBI:58332"/>
    </ligand>
</feature>
<feature type="binding site" evidence="1">
    <location>
        <position position="76"/>
    </location>
    <ligand>
        <name>a CDP-1,2-diacyl-sn-glycerol</name>
        <dbReference type="ChEBI" id="CHEBI:58332"/>
    </ligand>
</feature>
<feature type="binding site" evidence="1">
    <location>
        <position position="82"/>
    </location>
    <ligand>
        <name>a CDP-1,2-diacyl-sn-glycerol</name>
        <dbReference type="ChEBI" id="CHEBI:58332"/>
    </ligand>
</feature>
<feature type="binding site" evidence="1">
    <location>
        <position position="89"/>
    </location>
    <ligand>
        <name>Mg(2+)</name>
        <dbReference type="ChEBI" id="CHEBI:18420"/>
        <label>1</label>
    </ligand>
</feature>
<feature type="binding site" evidence="1">
    <location>
        <position position="89"/>
    </location>
    <ligand>
        <name>Mg(2+)</name>
        <dbReference type="ChEBI" id="CHEBI:18420"/>
        <label>2</label>
    </ligand>
</feature>
<feature type="binding site" evidence="1">
    <location>
        <position position="93"/>
    </location>
    <ligand>
        <name>Mg(2+)</name>
        <dbReference type="ChEBI" id="CHEBI:18420"/>
        <label>2</label>
    </ligand>
</feature>
<proteinExistence type="evidence at protein level"/>
<dbReference type="EC" id="2.7.8.-" evidence="5"/>
<dbReference type="EMBL" id="CP000854">
    <property type="protein sequence ID" value="ACC40540.1"/>
    <property type="molecule type" value="Genomic_DNA"/>
</dbReference>
<dbReference type="RefSeq" id="WP_012393864.1">
    <property type="nucleotide sequence ID" value="NC_010612.1"/>
</dbReference>
<dbReference type="SMR" id="B2HM76"/>
<dbReference type="STRING" id="216594.MMAR_2090"/>
<dbReference type="KEGG" id="mmi:MMAR_2090"/>
<dbReference type="eggNOG" id="COG0558">
    <property type="taxonomic scope" value="Bacteria"/>
</dbReference>
<dbReference type="HOGENOM" id="CLU_080384_0_1_11"/>
<dbReference type="OrthoDB" id="116551at2"/>
<dbReference type="UniPathway" id="UPA00220"/>
<dbReference type="Proteomes" id="UP000001190">
    <property type="component" value="Chromosome"/>
</dbReference>
<dbReference type="GO" id="GO:0005886">
    <property type="term" value="C:plasma membrane"/>
    <property type="evidence" value="ECO:0007669"/>
    <property type="project" value="UniProtKB-SubCell"/>
</dbReference>
<dbReference type="GO" id="GO:0000287">
    <property type="term" value="F:magnesium ion binding"/>
    <property type="evidence" value="ECO:0007669"/>
    <property type="project" value="UniProtKB-UniRule"/>
</dbReference>
<dbReference type="GO" id="GO:0016780">
    <property type="term" value="F:phosphotransferase activity, for other substituted phosphate groups"/>
    <property type="evidence" value="ECO:0007669"/>
    <property type="project" value="UniProtKB-UniRule"/>
</dbReference>
<dbReference type="GO" id="GO:0008654">
    <property type="term" value="P:phospholipid biosynthetic process"/>
    <property type="evidence" value="ECO:0007669"/>
    <property type="project" value="UniProtKB-UniRule"/>
</dbReference>
<dbReference type="Gene3D" id="1.20.120.1760">
    <property type="match status" value="1"/>
</dbReference>
<dbReference type="HAMAP" id="MF_02241">
    <property type="entry name" value="PIP_synthase"/>
    <property type="match status" value="1"/>
</dbReference>
<dbReference type="InterPro" id="IPR000462">
    <property type="entry name" value="CDP-OH_P_trans"/>
</dbReference>
<dbReference type="InterPro" id="IPR043130">
    <property type="entry name" value="CDP-OH_PTrfase_TM_dom"/>
</dbReference>
<dbReference type="InterPro" id="IPR048254">
    <property type="entry name" value="CDP_ALCOHOL_P_TRANSF_CS"/>
</dbReference>
<dbReference type="InterPro" id="IPR044268">
    <property type="entry name" value="PIP_synthase_PgsA1"/>
</dbReference>
<dbReference type="NCBIfam" id="NF045883">
    <property type="entry name" value="PIPSynth"/>
    <property type="match status" value="1"/>
</dbReference>
<dbReference type="Pfam" id="PF01066">
    <property type="entry name" value="CDP-OH_P_transf"/>
    <property type="match status" value="1"/>
</dbReference>
<dbReference type="PROSITE" id="PS00379">
    <property type="entry name" value="CDP_ALCOHOL_P_TRANSF"/>
    <property type="match status" value="1"/>
</dbReference>